<sequence length="161" mass="18124">MKVLYPGSFDPLTLGHLDLIHRASVLYEEVIIAVLENSTKSPTFSVSRRIEQIKESTKELSKIKILSYKGLTVECAKSLDVDFILRGLRAMSDFEYELQIAHTNRSIDKSIETIFLATEARHSFLSSSVVKEVAMFGGNIDHMVPAIVAKDLYKIYKQGDI</sequence>
<comment type="function">
    <text evidence="1">Reversibly transfers an adenylyl group from ATP to 4'-phosphopantetheine, yielding dephospho-CoA (dPCoA) and pyrophosphate.</text>
</comment>
<comment type="catalytic activity">
    <reaction evidence="1">
        <text>(R)-4'-phosphopantetheine + ATP + H(+) = 3'-dephospho-CoA + diphosphate</text>
        <dbReference type="Rhea" id="RHEA:19801"/>
        <dbReference type="ChEBI" id="CHEBI:15378"/>
        <dbReference type="ChEBI" id="CHEBI:30616"/>
        <dbReference type="ChEBI" id="CHEBI:33019"/>
        <dbReference type="ChEBI" id="CHEBI:57328"/>
        <dbReference type="ChEBI" id="CHEBI:61723"/>
        <dbReference type="EC" id="2.7.7.3"/>
    </reaction>
</comment>
<comment type="cofactor">
    <cofactor evidence="1">
        <name>Mg(2+)</name>
        <dbReference type="ChEBI" id="CHEBI:18420"/>
    </cofactor>
</comment>
<comment type="pathway">
    <text evidence="1">Cofactor biosynthesis; coenzyme A biosynthesis; CoA from (R)-pantothenate: step 4/5.</text>
</comment>
<comment type="subunit">
    <text evidence="1">Homohexamer.</text>
</comment>
<comment type="subcellular location">
    <subcellularLocation>
        <location evidence="1">Cytoplasm</location>
    </subcellularLocation>
</comment>
<comment type="similarity">
    <text evidence="1">Belongs to the bacterial CoaD family.</text>
</comment>
<protein>
    <recommendedName>
        <fullName evidence="1">Phosphopantetheine adenylyltransferase</fullName>
        <ecNumber evidence="1">2.7.7.3</ecNumber>
    </recommendedName>
    <alternativeName>
        <fullName evidence="1">Dephospho-CoA pyrophosphorylase</fullName>
    </alternativeName>
    <alternativeName>
        <fullName evidence="1">Pantetheine-phosphate adenylyltransferase</fullName>
        <shortName evidence="1">PPAT</shortName>
    </alternativeName>
</protein>
<feature type="chain" id="PRO_0000156254" description="Phosphopantetheine adenylyltransferase">
    <location>
        <begin position="1"/>
        <end position="161"/>
    </location>
</feature>
<feature type="binding site" evidence="1">
    <location>
        <begin position="8"/>
        <end position="9"/>
    </location>
    <ligand>
        <name>ATP</name>
        <dbReference type="ChEBI" id="CHEBI:30616"/>
    </ligand>
</feature>
<feature type="binding site" evidence="1">
    <location>
        <position position="8"/>
    </location>
    <ligand>
        <name>substrate</name>
    </ligand>
</feature>
<feature type="binding site" evidence="1">
    <location>
        <position position="16"/>
    </location>
    <ligand>
        <name>ATP</name>
        <dbReference type="ChEBI" id="CHEBI:30616"/>
    </ligand>
</feature>
<feature type="binding site" evidence="1">
    <location>
        <position position="40"/>
    </location>
    <ligand>
        <name>substrate</name>
    </ligand>
</feature>
<feature type="binding site" evidence="1">
    <location>
        <position position="72"/>
    </location>
    <ligand>
        <name>substrate</name>
    </ligand>
</feature>
<feature type="binding site" evidence="1">
    <location>
        <position position="86"/>
    </location>
    <ligand>
        <name>substrate</name>
    </ligand>
</feature>
<feature type="binding site" evidence="1">
    <location>
        <begin position="87"/>
        <end position="89"/>
    </location>
    <ligand>
        <name>ATP</name>
        <dbReference type="ChEBI" id="CHEBI:30616"/>
    </ligand>
</feature>
<feature type="binding site" evidence="1">
    <location>
        <position position="97"/>
    </location>
    <ligand>
        <name>ATP</name>
        <dbReference type="ChEBI" id="CHEBI:30616"/>
    </ligand>
</feature>
<feature type="binding site" evidence="1">
    <location>
        <begin position="122"/>
        <end position="128"/>
    </location>
    <ligand>
        <name>ATP</name>
        <dbReference type="ChEBI" id="CHEBI:30616"/>
    </ligand>
</feature>
<feature type="site" description="Transition state stabilizer" evidence="1">
    <location>
        <position position="16"/>
    </location>
</feature>
<keyword id="KW-0067">ATP-binding</keyword>
<keyword id="KW-0173">Coenzyme A biosynthesis</keyword>
<keyword id="KW-0963">Cytoplasm</keyword>
<keyword id="KW-0460">Magnesium</keyword>
<keyword id="KW-0547">Nucleotide-binding</keyword>
<keyword id="KW-0548">Nucleotidyltransferase</keyword>
<keyword id="KW-1185">Reference proteome</keyword>
<keyword id="KW-0808">Transferase</keyword>
<reference key="1">
    <citation type="journal article" date="2003" name="Proc. Natl. Acad. Sci. U.S.A.">
        <title>Genome sequence of the cyanobacterium Prochlorococcus marinus SS120, a nearly minimal oxyphototrophic genome.</title>
        <authorList>
            <person name="Dufresne A."/>
            <person name="Salanoubat M."/>
            <person name="Partensky F."/>
            <person name="Artiguenave F."/>
            <person name="Axmann I.M."/>
            <person name="Barbe V."/>
            <person name="Duprat S."/>
            <person name="Galperin M.Y."/>
            <person name="Koonin E.V."/>
            <person name="Le Gall F."/>
            <person name="Makarova K.S."/>
            <person name="Ostrowski M."/>
            <person name="Oztas S."/>
            <person name="Robert C."/>
            <person name="Rogozin I.B."/>
            <person name="Scanlan D.J."/>
            <person name="Tandeau de Marsac N."/>
            <person name="Weissenbach J."/>
            <person name="Wincker P."/>
            <person name="Wolf Y.I."/>
            <person name="Hess W.R."/>
        </authorList>
    </citation>
    <scope>NUCLEOTIDE SEQUENCE [LARGE SCALE GENOMIC DNA]</scope>
    <source>
        <strain>SARG / CCMP1375 / SS120</strain>
    </source>
</reference>
<evidence type="ECO:0000255" key="1">
    <source>
        <dbReference type="HAMAP-Rule" id="MF_00151"/>
    </source>
</evidence>
<dbReference type="EC" id="2.7.7.3" evidence="1"/>
<dbReference type="EMBL" id="AE017126">
    <property type="protein sequence ID" value="AAP99996.1"/>
    <property type="molecule type" value="Genomic_DNA"/>
</dbReference>
<dbReference type="RefSeq" id="NP_875344.1">
    <property type="nucleotide sequence ID" value="NC_005042.1"/>
</dbReference>
<dbReference type="RefSeq" id="WP_011125104.1">
    <property type="nucleotide sequence ID" value="NC_005042.1"/>
</dbReference>
<dbReference type="SMR" id="Q7VBZ0"/>
<dbReference type="STRING" id="167539.Pro_0952"/>
<dbReference type="EnsemblBacteria" id="AAP99996">
    <property type="protein sequence ID" value="AAP99996"/>
    <property type="gene ID" value="Pro_0952"/>
</dbReference>
<dbReference type="KEGG" id="pma:Pro_0952"/>
<dbReference type="PATRIC" id="fig|167539.5.peg.1001"/>
<dbReference type="eggNOG" id="COG0669">
    <property type="taxonomic scope" value="Bacteria"/>
</dbReference>
<dbReference type="HOGENOM" id="CLU_100149_1_1_3"/>
<dbReference type="OrthoDB" id="9806661at2"/>
<dbReference type="UniPathway" id="UPA00241">
    <property type="reaction ID" value="UER00355"/>
</dbReference>
<dbReference type="Proteomes" id="UP000001420">
    <property type="component" value="Chromosome"/>
</dbReference>
<dbReference type="GO" id="GO:0005737">
    <property type="term" value="C:cytoplasm"/>
    <property type="evidence" value="ECO:0007669"/>
    <property type="project" value="UniProtKB-SubCell"/>
</dbReference>
<dbReference type="GO" id="GO:0005524">
    <property type="term" value="F:ATP binding"/>
    <property type="evidence" value="ECO:0007669"/>
    <property type="project" value="UniProtKB-KW"/>
</dbReference>
<dbReference type="GO" id="GO:0004595">
    <property type="term" value="F:pantetheine-phosphate adenylyltransferase activity"/>
    <property type="evidence" value="ECO:0007669"/>
    <property type="project" value="UniProtKB-UniRule"/>
</dbReference>
<dbReference type="GO" id="GO:0015937">
    <property type="term" value="P:coenzyme A biosynthetic process"/>
    <property type="evidence" value="ECO:0007669"/>
    <property type="project" value="UniProtKB-UniRule"/>
</dbReference>
<dbReference type="CDD" id="cd02163">
    <property type="entry name" value="PPAT"/>
    <property type="match status" value="1"/>
</dbReference>
<dbReference type="Gene3D" id="3.40.50.620">
    <property type="entry name" value="HUPs"/>
    <property type="match status" value="1"/>
</dbReference>
<dbReference type="HAMAP" id="MF_00151">
    <property type="entry name" value="PPAT_bact"/>
    <property type="match status" value="1"/>
</dbReference>
<dbReference type="InterPro" id="IPR004821">
    <property type="entry name" value="Cyt_trans-like"/>
</dbReference>
<dbReference type="InterPro" id="IPR001980">
    <property type="entry name" value="PPAT"/>
</dbReference>
<dbReference type="InterPro" id="IPR014729">
    <property type="entry name" value="Rossmann-like_a/b/a_fold"/>
</dbReference>
<dbReference type="NCBIfam" id="TIGR01510">
    <property type="entry name" value="coaD_prev_kdtB"/>
    <property type="match status" value="1"/>
</dbReference>
<dbReference type="NCBIfam" id="TIGR00125">
    <property type="entry name" value="cyt_tran_rel"/>
    <property type="match status" value="1"/>
</dbReference>
<dbReference type="PANTHER" id="PTHR21342">
    <property type="entry name" value="PHOSPHOPANTETHEINE ADENYLYLTRANSFERASE"/>
    <property type="match status" value="1"/>
</dbReference>
<dbReference type="PANTHER" id="PTHR21342:SF1">
    <property type="entry name" value="PHOSPHOPANTETHEINE ADENYLYLTRANSFERASE"/>
    <property type="match status" value="1"/>
</dbReference>
<dbReference type="Pfam" id="PF01467">
    <property type="entry name" value="CTP_transf_like"/>
    <property type="match status" value="1"/>
</dbReference>
<dbReference type="PRINTS" id="PR01020">
    <property type="entry name" value="LPSBIOSNTHSS"/>
</dbReference>
<dbReference type="SUPFAM" id="SSF52374">
    <property type="entry name" value="Nucleotidylyl transferase"/>
    <property type="match status" value="1"/>
</dbReference>
<gene>
    <name evidence="1" type="primary">coaD</name>
    <name type="ordered locus">Pro_0952</name>
</gene>
<organism>
    <name type="scientific">Prochlorococcus marinus (strain SARG / CCMP1375 / SS120)</name>
    <dbReference type="NCBI Taxonomy" id="167539"/>
    <lineage>
        <taxon>Bacteria</taxon>
        <taxon>Bacillati</taxon>
        <taxon>Cyanobacteriota</taxon>
        <taxon>Cyanophyceae</taxon>
        <taxon>Synechococcales</taxon>
        <taxon>Prochlorococcaceae</taxon>
        <taxon>Prochlorococcus</taxon>
    </lineage>
</organism>
<accession>Q7VBZ0</accession>
<name>COAD_PROMA</name>
<proteinExistence type="inferred from homology"/>